<accession>C1FS67</accession>
<protein>
    <recommendedName>
        <fullName evidence="1">1-deoxy-D-xylulose 5-phosphate reductoisomerase</fullName>
        <shortName evidence="1">DXP reductoisomerase</shortName>
        <ecNumber evidence="1">1.1.1.267</ecNumber>
    </recommendedName>
    <alternativeName>
        <fullName evidence="1">1-deoxyxylulose-5-phosphate reductoisomerase</fullName>
    </alternativeName>
    <alternativeName>
        <fullName evidence="1">2-C-methyl-D-erythritol 4-phosphate synthase</fullName>
    </alternativeName>
</protein>
<gene>
    <name evidence="1" type="primary">dxr</name>
    <name type="ordered locus">CLM_2719</name>
</gene>
<comment type="function">
    <text evidence="1">Catalyzes the NADPH-dependent rearrangement and reduction of 1-deoxy-D-xylulose-5-phosphate (DXP) to 2-C-methyl-D-erythritol 4-phosphate (MEP).</text>
</comment>
<comment type="catalytic activity">
    <reaction evidence="1">
        <text>2-C-methyl-D-erythritol 4-phosphate + NADP(+) = 1-deoxy-D-xylulose 5-phosphate + NADPH + H(+)</text>
        <dbReference type="Rhea" id="RHEA:13717"/>
        <dbReference type="ChEBI" id="CHEBI:15378"/>
        <dbReference type="ChEBI" id="CHEBI:57783"/>
        <dbReference type="ChEBI" id="CHEBI:57792"/>
        <dbReference type="ChEBI" id="CHEBI:58262"/>
        <dbReference type="ChEBI" id="CHEBI:58349"/>
        <dbReference type="EC" id="1.1.1.267"/>
    </reaction>
    <physiologicalReaction direction="right-to-left" evidence="1">
        <dbReference type="Rhea" id="RHEA:13719"/>
    </physiologicalReaction>
</comment>
<comment type="cofactor">
    <cofactor evidence="1">
        <name>Mg(2+)</name>
        <dbReference type="ChEBI" id="CHEBI:18420"/>
    </cofactor>
    <cofactor evidence="1">
        <name>Mn(2+)</name>
        <dbReference type="ChEBI" id="CHEBI:29035"/>
    </cofactor>
</comment>
<comment type="pathway">
    <text evidence="1">Isoprenoid biosynthesis; isopentenyl diphosphate biosynthesis via DXP pathway; isopentenyl diphosphate from 1-deoxy-D-xylulose 5-phosphate: step 1/6.</text>
</comment>
<comment type="similarity">
    <text evidence="1">Belongs to the DXR family.</text>
</comment>
<feature type="chain" id="PRO_1000124085" description="1-deoxy-D-xylulose 5-phosphate reductoisomerase">
    <location>
        <begin position="1"/>
        <end position="385"/>
    </location>
</feature>
<feature type="binding site" evidence="1">
    <location>
        <position position="10"/>
    </location>
    <ligand>
        <name>NADPH</name>
        <dbReference type="ChEBI" id="CHEBI:57783"/>
    </ligand>
</feature>
<feature type="binding site" evidence="1">
    <location>
        <position position="11"/>
    </location>
    <ligand>
        <name>NADPH</name>
        <dbReference type="ChEBI" id="CHEBI:57783"/>
    </ligand>
</feature>
<feature type="binding site" evidence="1">
    <location>
        <position position="12"/>
    </location>
    <ligand>
        <name>NADPH</name>
        <dbReference type="ChEBI" id="CHEBI:57783"/>
    </ligand>
</feature>
<feature type="binding site" evidence="1">
    <location>
        <position position="13"/>
    </location>
    <ligand>
        <name>NADPH</name>
        <dbReference type="ChEBI" id="CHEBI:57783"/>
    </ligand>
</feature>
<feature type="binding site" evidence="1">
    <location>
        <position position="37"/>
    </location>
    <ligand>
        <name>NADPH</name>
        <dbReference type="ChEBI" id="CHEBI:57783"/>
    </ligand>
</feature>
<feature type="binding site" evidence="1">
    <location>
        <position position="124"/>
    </location>
    <ligand>
        <name>NADPH</name>
        <dbReference type="ChEBI" id="CHEBI:57783"/>
    </ligand>
</feature>
<feature type="binding site" evidence="1">
    <location>
        <position position="125"/>
    </location>
    <ligand>
        <name>1-deoxy-D-xylulose 5-phosphate</name>
        <dbReference type="ChEBI" id="CHEBI:57792"/>
    </ligand>
</feature>
<feature type="binding site" evidence="1">
    <location>
        <position position="126"/>
    </location>
    <ligand>
        <name>NADPH</name>
        <dbReference type="ChEBI" id="CHEBI:57783"/>
    </ligand>
</feature>
<feature type="binding site" evidence="1">
    <location>
        <position position="150"/>
    </location>
    <ligand>
        <name>Mn(2+)</name>
        <dbReference type="ChEBI" id="CHEBI:29035"/>
    </ligand>
</feature>
<feature type="binding site" evidence="1">
    <location>
        <position position="151"/>
    </location>
    <ligand>
        <name>1-deoxy-D-xylulose 5-phosphate</name>
        <dbReference type="ChEBI" id="CHEBI:57792"/>
    </ligand>
</feature>
<feature type="binding site" evidence="1">
    <location>
        <position position="152"/>
    </location>
    <ligand>
        <name>1-deoxy-D-xylulose 5-phosphate</name>
        <dbReference type="ChEBI" id="CHEBI:57792"/>
    </ligand>
</feature>
<feature type="binding site" evidence="1">
    <location>
        <position position="152"/>
    </location>
    <ligand>
        <name>Mn(2+)</name>
        <dbReference type="ChEBI" id="CHEBI:29035"/>
    </ligand>
</feature>
<feature type="binding site" evidence="1">
    <location>
        <position position="176"/>
    </location>
    <ligand>
        <name>1-deoxy-D-xylulose 5-phosphate</name>
        <dbReference type="ChEBI" id="CHEBI:57792"/>
    </ligand>
</feature>
<feature type="binding site" evidence="1">
    <location>
        <position position="199"/>
    </location>
    <ligand>
        <name>1-deoxy-D-xylulose 5-phosphate</name>
        <dbReference type="ChEBI" id="CHEBI:57792"/>
    </ligand>
</feature>
<feature type="binding site" evidence="1">
    <location>
        <position position="205"/>
    </location>
    <ligand>
        <name>NADPH</name>
        <dbReference type="ChEBI" id="CHEBI:57783"/>
    </ligand>
</feature>
<feature type="binding site" evidence="1">
    <location>
        <position position="212"/>
    </location>
    <ligand>
        <name>1-deoxy-D-xylulose 5-phosphate</name>
        <dbReference type="ChEBI" id="CHEBI:57792"/>
    </ligand>
</feature>
<feature type="binding site" evidence="1">
    <location>
        <position position="217"/>
    </location>
    <ligand>
        <name>1-deoxy-D-xylulose 5-phosphate</name>
        <dbReference type="ChEBI" id="CHEBI:57792"/>
    </ligand>
</feature>
<feature type="binding site" evidence="1">
    <location>
        <position position="218"/>
    </location>
    <ligand>
        <name>1-deoxy-D-xylulose 5-phosphate</name>
        <dbReference type="ChEBI" id="CHEBI:57792"/>
    </ligand>
</feature>
<feature type="binding site" evidence="1">
    <location>
        <position position="221"/>
    </location>
    <ligand>
        <name>1-deoxy-D-xylulose 5-phosphate</name>
        <dbReference type="ChEBI" id="CHEBI:57792"/>
    </ligand>
</feature>
<feature type="binding site" evidence="1">
    <location>
        <position position="221"/>
    </location>
    <ligand>
        <name>Mn(2+)</name>
        <dbReference type="ChEBI" id="CHEBI:29035"/>
    </ligand>
</feature>
<evidence type="ECO:0000255" key="1">
    <source>
        <dbReference type="HAMAP-Rule" id="MF_00183"/>
    </source>
</evidence>
<proteinExistence type="inferred from homology"/>
<dbReference type="EC" id="1.1.1.267" evidence="1"/>
<dbReference type="EMBL" id="CP001581">
    <property type="protein sequence ID" value="ACO83543.1"/>
    <property type="molecule type" value="Genomic_DNA"/>
</dbReference>
<dbReference type="RefSeq" id="WP_003384671.1">
    <property type="nucleotide sequence ID" value="NC_012563.1"/>
</dbReference>
<dbReference type="SMR" id="C1FS67"/>
<dbReference type="KEGG" id="cby:CLM_2719"/>
<dbReference type="eggNOG" id="COG0743">
    <property type="taxonomic scope" value="Bacteria"/>
</dbReference>
<dbReference type="HOGENOM" id="CLU_035714_4_0_9"/>
<dbReference type="UniPathway" id="UPA00056">
    <property type="reaction ID" value="UER00092"/>
</dbReference>
<dbReference type="Proteomes" id="UP000001374">
    <property type="component" value="Chromosome"/>
</dbReference>
<dbReference type="GO" id="GO:0030604">
    <property type="term" value="F:1-deoxy-D-xylulose-5-phosphate reductoisomerase activity"/>
    <property type="evidence" value="ECO:0007669"/>
    <property type="project" value="UniProtKB-UniRule"/>
</dbReference>
<dbReference type="GO" id="GO:0030145">
    <property type="term" value="F:manganese ion binding"/>
    <property type="evidence" value="ECO:0007669"/>
    <property type="project" value="TreeGrafter"/>
</dbReference>
<dbReference type="GO" id="GO:0070402">
    <property type="term" value="F:NADPH binding"/>
    <property type="evidence" value="ECO:0007669"/>
    <property type="project" value="InterPro"/>
</dbReference>
<dbReference type="GO" id="GO:0051484">
    <property type="term" value="P:isopentenyl diphosphate biosynthetic process, methylerythritol 4-phosphate pathway involved in terpenoid biosynthetic process"/>
    <property type="evidence" value="ECO:0007669"/>
    <property type="project" value="TreeGrafter"/>
</dbReference>
<dbReference type="FunFam" id="3.40.50.720:FF:000045">
    <property type="entry name" value="1-deoxy-D-xylulose 5-phosphate reductoisomerase"/>
    <property type="match status" value="1"/>
</dbReference>
<dbReference type="Gene3D" id="1.10.1740.10">
    <property type="match status" value="1"/>
</dbReference>
<dbReference type="Gene3D" id="3.40.50.720">
    <property type="entry name" value="NAD(P)-binding Rossmann-like Domain"/>
    <property type="match status" value="1"/>
</dbReference>
<dbReference type="HAMAP" id="MF_00183">
    <property type="entry name" value="DXP_reductoisom"/>
    <property type="match status" value="1"/>
</dbReference>
<dbReference type="InterPro" id="IPR003821">
    <property type="entry name" value="DXP_reductoisomerase"/>
</dbReference>
<dbReference type="InterPro" id="IPR013644">
    <property type="entry name" value="DXP_reductoisomerase_C"/>
</dbReference>
<dbReference type="InterPro" id="IPR013512">
    <property type="entry name" value="DXP_reductoisomerase_N"/>
</dbReference>
<dbReference type="InterPro" id="IPR026877">
    <property type="entry name" value="DXPR_C"/>
</dbReference>
<dbReference type="InterPro" id="IPR036169">
    <property type="entry name" value="DXPR_C_sf"/>
</dbReference>
<dbReference type="InterPro" id="IPR036291">
    <property type="entry name" value="NAD(P)-bd_dom_sf"/>
</dbReference>
<dbReference type="NCBIfam" id="TIGR00243">
    <property type="entry name" value="Dxr"/>
    <property type="match status" value="1"/>
</dbReference>
<dbReference type="NCBIfam" id="NF009114">
    <property type="entry name" value="PRK12464.1"/>
    <property type="match status" value="1"/>
</dbReference>
<dbReference type="PANTHER" id="PTHR30525">
    <property type="entry name" value="1-DEOXY-D-XYLULOSE 5-PHOSPHATE REDUCTOISOMERASE"/>
    <property type="match status" value="1"/>
</dbReference>
<dbReference type="PANTHER" id="PTHR30525:SF0">
    <property type="entry name" value="1-DEOXY-D-XYLULOSE 5-PHOSPHATE REDUCTOISOMERASE, CHLOROPLASTIC"/>
    <property type="match status" value="1"/>
</dbReference>
<dbReference type="Pfam" id="PF08436">
    <property type="entry name" value="DXP_redisom_C"/>
    <property type="match status" value="1"/>
</dbReference>
<dbReference type="Pfam" id="PF02670">
    <property type="entry name" value="DXP_reductoisom"/>
    <property type="match status" value="1"/>
</dbReference>
<dbReference type="Pfam" id="PF13288">
    <property type="entry name" value="DXPR_C"/>
    <property type="match status" value="1"/>
</dbReference>
<dbReference type="PIRSF" id="PIRSF006205">
    <property type="entry name" value="Dxp_reductismrs"/>
    <property type="match status" value="1"/>
</dbReference>
<dbReference type="SUPFAM" id="SSF69055">
    <property type="entry name" value="1-deoxy-D-xylulose-5-phosphate reductoisomerase, C-terminal domain"/>
    <property type="match status" value="1"/>
</dbReference>
<dbReference type="SUPFAM" id="SSF55347">
    <property type="entry name" value="Glyceraldehyde-3-phosphate dehydrogenase-like, C-terminal domain"/>
    <property type="match status" value="1"/>
</dbReference>
<dbReference type="SUPFAM" id="SSF51735">
    <property type="entry name" value="NAD(P)-binding Rossmann-fold domains"/>
    <property type="match status" value="1"/>
</dbReference>
<name>DXR_CLOBJ</name>
<keyword id="KW-0414">Isoprene biosynthesis</keyword>
<keyword id="KW-0464">Manganese</keyword>
<keyword id="KW-0479">Metal-binding</keyword>
<keyword id="KW-0521">NADP</keyword>
<keyword id="KW-0560">Oxidoreductase</keyword>
<reference key="1">
    <citation type="submission" date="2008-10" db="EMBL/GenBank/DDBJ databases">
        <title>Genome sequence of Clostridium botulinum A2 Kyoto.</title>
        <authorList>
            <person name="Shrivastava S."/>
            <person name="Brinkac L.M."/>
            <person name="Brown J.L."/>
            <person name="Bruce D."/>
            <person name="Detter C.C."/>
            <person name="Johnson E.A."/>
            <person name="Munk C.A."/>
            <person name="Smith L.A."/>
            <person name="Smith T.J."/>
            <person name="Sutton G."/>
            <person name="Brettin T.S."/>
        </authorList>
    </citation>
    <scope>NUCLEOTIDE SEQUENCE [LARGE SCALE GENOMIC DNA]</scope>
    <source>
        <strain>Kyoto / Type A2</strain>
    </source>
</reference>
<organism>
    <name type="scientific">Clostridium botulinum (strain Kyoto / Type A2)</name>
    <dbReference type="NCBI Taxonomy" id="536232"/>
    <lineage>
        <taxon>Bacteria</taxon>
        <taxon>Bacillati</taxon>
        <taxon>Bacillota</taxon>
        <taxon>Clostridia</taxon>
        <taxon>Eubacteriales</taxon>
        <taxon>Clostridiaceae</taxon>
        <taxon>Clostridium</taxon>
    </lineage>
</organism>
<sequence>MKNITILGATGSIGTQTLDVIRREKEELKLVAISANKSYKKVIEIIKEFKPKYAVLMEENAFKIVEDFCIDNKIDTKVLKGMEGMIYISTLEEVNTVVTSVVGMIGLVPTIKAIESGKDIALANKETLVVAGELVISKAKEHNVNILPVDSEHGAIFQCLRGNKKEEVKNIIVTASGGPFRGKKKEELIDVKPEHALKHPKWNMGRKISIDSATLMNKGLEVIEAHFLFGVDYENIKVVVHPQSIVHSMVEYKDGSVIAQMATPDMKLPIQYALNYPNRKESQIEPLDFYKISNLTFEKPDMDTFLPLKLAYEAGKKGGVMPAILNGANEVAVDLFLKGKIEFLQIGDLLQECMNKFYKSMEATLENVISVDKEVREYLGKKYDI</sequence>